<name>RLMKL_YERE8</name>
<protein>
    <recommendedName>
        <fullName evidence="1">Ribosomal RNA large subunit methyltransferase K/L</fullName>
    </recommendedName>
    <domain>
        <recommendedName>
            <fullName evidence="1">23S rRNA m2G2445 methyltransferase</fullName>
            <ecNumber evidence="1">2.1.1.173</ecNumber>
        </recommendedName>
        <alternativeName>
            <fullName evidence="1">rRNA (guanine-N(2)-)-methyltransferase RlmL</fullName>
        </alternativeName>
    </domain>
    <domain>
        <recommendedName>
            <fullName evidence="1">23S rRNA m7G2069 methyltransferase</fullName>
            <ecNumber evidence="1">2.1.1.264</ecNumber>
        </recommendedName>
        <alternativeName>
            <fullName evidence="1">rRNA (guanine-N(7)-)-methyltransferase RlmK</fullName>
        </alternativeName>
    </domain>
</protein>
<keyword id="KW-0963">Cytoplasm</keyword>
<keyword id="KW-0489">Methyltransferase</keyword>
<keyword id="KW-0694">RNA-binding</keyword>
<keyword id="KW-0698">rRNA processing</keyword>
<keyword id="KW-0949">S-adenosyl-L-methionine</keyword>
<keyword id="KW-0808">Transferase</keyword>
<comment type="function">
    <text evidence="1">Specifically methylates the guanine in position 2445 (m2G2445) and the guanine in position 2069 (m7G2069) of 23S rRNA.</text>
</comment>
<comment type="catalytic activity">
    <reaction evidence="1">
        <text>guanosine(2445) in 23S rRNA + S-adenosyl-L-methionine = N(2)-methylguanosine(2445) in 23S rRNA + S-adenosyl-L-homocysteine + H(+)</text>
        <dbReference type="Rhea" id="RHEA:42740"/>
        <dbReference type="Rhea" id="RHEA-COMP:10215"/>
        <dbReference type="Rhea" id="RHEA-COMP:10216"/>
        <dbReference type="ChEBI" id="CHEBI:15378"/>
        <dbReference type="ChEBI" id="CHEBI:57856"/>
        <dbReference type="ChEBI" id="CHEBI:59789"/>
        <dbReference type="ChEBI" id="CHEBI:74269"/>
        <dbReference type="ChEBI" id="CHEBI:74481"/>
        <dbReference type="EC" id="2.1.1.173"/>
    </reaction>
</comment>
<comment type="catalytic activity">
    <reaction evidence="1">
        <text>guanosine(2069) in 23S rRNA + S-adenosyl-L-methionine = N(2)-methylguanosine(2069) in 23S rRNA + S-adenosyl-L-homocysteine + H(+)</text>
        <dbReference type="Rhea" id="RHEA:43772"/>
        <dbReference type="Rhea" id="RHEA-COMP:10688"/>
        <dbReference type="Rhea" id="RHEA-COMP:10689"/>
        <dbReference type="ChEBI" id="CHEBI:15378"/>
        <dbReference type="ChEBI" id="CHEBI:57856"/>
        <dbReference type="ChEBI" id="CHEBI:59789"/>
        <dbReference type="ChEBI" id="CHEBI:74269"/>
        <dbReference type="ChEBI" id="CHEBI:74481"/>
        <dbReference type="EC" id="2.1.1.264"/>
    </reaction>
</comment>
<comment type="subcellular location">
    <subcellularLocation>
        <location evidence="1">Cytoplasm</location>
    </subcellularLocation>
</comment>
<comment type="similarity">
    <text evidence="1">Belongs to the methyltransferase superfamily. RlmKL family.</text>
</comment>
<reference key="1">
    <citation type="journal article" date="2006" name="PLoS Genet.">
        <title>The complete genome sequence and comparative genome analysis of the high pathogenicity Yersinia enterocolitica strain 8081.</title>
        <authorList>
            <person name="Thomson N.R."/>
            <person name="Howard S."/>
            <person name="Wren B.W."/>
            <person name="Holden M.T.G."/>
            <person name="Crossman L."/>
            <person name="Challis G.L."/>
            <person name="Churcher C."/>
            <person name="Mungall K."/>
            <person name="Brooks K."/>
            <person name="Chillingworth T."/>
            <person name="Feltwell T."/>
            <person name="Abdellah Z."/>
            <person name="Hauser H."/>
            <person name="Jagels K."/>
            <person name="Maddison M."/>
            <person name="Moule S."/>
            <person name="Sanders M."/>
            <person name="Whitehead S."/>
            <person name="Quail M.A."/>
            <person name="Dougan G."/>
            <person name="Parkhill J."/>
            <person name="Prentice M.B."/>
        </authorList>
    </citation>
    <scope>NUCLEOTIDE SEQUENCE [LARGE SCALE GENOMIC DNA]</scope>
    <source>
        <strain>NCTC 13174 / 8081</strain>
    </source>
</reference>
<organism>
    <name type="scientific">Yersinia enterocolitica serotype O:8 / biotype 1B (strain NCTC 13174 / 8081)</name>
    <dbReference type="NCBI Taxonomy" id="393305"/>
    <lineage>
        <taxon>Bacteria</taxon>
        <taxon>Pseudomonadati</taxon>
        <taxon>Pseudomonadota</taxon>
        <taxon>Gammaproteobacteria</taxon>
        <taxon>Enterobacterales</taxon>
        <taxon>Yersiniaceae</taxon>
        <taxon>Yersinia</taxon>
    </lineage>
</organism>
<feature type="chain" id="PRO_0000366865" description="Ribosomal RNA large subunit methyltransferase K/L">
    <location>
        <begin position="1"/>
        <end position="706"/>
    </location>
</feature>
<feature type="domain" description="THUMP" evidence="1">
    <location>
        <begin position="43"/>
        <end position="154"/>
    </location>
</feature>
<gene>
    <name evidence="1" type="primary">rlmL</name>
    <name type="ordered locus">YE1571</name>
</gene>
<dbReference type="EC" id="2.1.1.173" evidence="1"/>
<dbReference type="EC" id="2.1.1.264" evidence="1"/>
<dbReference type="EMBL" id="AM286415">
    <property type="protein sequence ID" value="CAL11648.1"/>
    <property type="molecule type" value="Genomic_DNA"/>
</dbReference>
<dbReference type="RefSeq" id="WP_011816048.1">
    <property type="nucleotide sequence ID" value="NC_008800.1"/>
</dbReference>
<dbReference type="RefSeq" id="YP_001005864.1">
    <property type="nucleotide sequence ID" value="NC_008800.1"/>
</dbReference>
<dbReference type="SMR" id="A1JMQ6"/>
<dbReference type="KEGG" id="yen:YE1571"/>
<dbReference type="PATRIC" id="fig|393305.7.peg.1699"/>
<dbReference type="eggNOG" id="COG0116">
    <property type="taxonomic scope" value="Bacteria"/>
</dbReference>
<dbReference type="eggNOG" id="COG1092">
    <property type="taxonomic scope" value="Bacteria"/>
</dbReference>
<dbReference type="HOGENOM" id="CLU_014042_2_0_6"/>
<dbReference type="OrthoDB" id="9809404at2"/>
<dbReference type="Proteomes" id="UP000000642">
    <property type="component" value="Chromosome"/>
</dbReference>
<dbReference type="GO" id="GO:0005737">
    <property type="term" value="C:cytoplasm"/>
    <property type="evidence" value="ECO:0007669"/>
    <property type="project" value="UniProtKB-SubCell"/>
</dbReference>
<dbReference type="GO" id="GO:0052915">
    <property type="term" value="F:23S rRNA (guanine(2445)-N(2))-methyltransferase activity"/>
    <property type="evidence" value="ECO:0007669"/>
    <property type="project" value="UniProtKB-UniRule"/>
</dbReference>
<dbReference type="GO" id="GO:0003723">
    <property type="term" value="F:RNA binding"/>
    <property type="evidence" value="ECO:0007669"/>
    <property type="project" value="UniProtKB-KW"/>
</dbReference>
<dbReference type="GO" id="GO:0070043">
    <property type="term" value="F:rRNA (guanine-N7-)-methyltransferase activity"/>
    <property type="evidence" value="ECO:0007669"/>
    <property type="project" value="UniProtKB-UniRule"/>
</dbReference>
<dbReference type="CDD" id="cd02440">
    <property type="entry name" value="AdoMet_MTases"/>
    <property type="match status" value="2"/>
</dbReference>
<dbReference type="CDD" id="cd11715">
    <property type="entry name" value="THUMP_AdoMetMT"/>
    <property type="match status" value="1"/>
</dbReference>
<dbReference type="FunFam" id="3.30.750.80:FF:000001">
    <property type="entry name" value="Ribosomal RNA large subunit methyltransferase K/L"/>
    <property type="match status" value="1"/>
</dbReference>
<dbReference type="FunFam" id="3.40.50.150:FF:000039">
    <property type="entry name" value="Ribosomal RNA large subunit methyltransferase K/L"/>
    <property type="match status" value="1"/>
</dbReference>
<dbReference type="Gene3D" id="3.30.2130.30">
    <property type="match status" value="1"/>
</dbReference>
<dbReference type="Gene3D" id="3.30.750.80">
    <property type="entry name" value="RNA methyltransferase domain (HRMD) like"/>
    <property type="match status" value="1"/>
</dbReference>
<dbReference type="Gene3D" id="3.40.50.150">
    <property type="entry name" value="Vaccinia Virus protein VP39"/>
    <property type="match status" value="2"/>
</dbReference>
<dbReference type="HAMAP" id="MF_01858">
    <property type="entry name" value="23SrRNA_methyltr_KL"/>
    <property type="match status" value="1"/>
</dbReference>
<dbReference type="InterPro" id="IPR017244">
    <property type="entry name" value="23SrRNA_methyltr_KL"/>
</dbReference>
<dbReference type="InterPro" id="IPR002052">
    <property type="entry name" value="DNA_methylase_N6_adenine_CS"/>
</dbReference>
<dbReference type="InterPro" id="IPR000241">
    <property type="entry name" value="RlmKL-like_Mtase"/>
</dbReference>
<dbReference type="InterPro" id="IPR053943">
    <property type="entry name" value="RlmKL-like_Mtase_CS"/>
</dbReference>
<dbReference type="InterPro" id="IPR054170">
    <property type="entry name" value="RlmL_1st"/>
</dbReference>
<dbReference type="InterPro" id="IPR019614">
    <property type="entry name" value="SAM-dep_methyl-trfase"/>
</dbReference>
<dbReference type="InterPro" id="IPR029063">
    <property type="entry name" value="SAM-dependent_MTases_sf"/>
</dbReference>
<dbReference type="InterPro" id="IPR004114">
    <property type="entry name" value="THUMP_dom"/>
</dbReference>
<dbReference type="NCBIfam" id="NF008748">
    <property type="entry name" value="PRK11783.1"/>
    <property type="match status" value="1"/>
</dbReference>
<dbReference type="PANTHER" id="PTHR47313">
    <property type="entry name" value="RIBOSOMAL RNA LARGE SUBUNIT METHYLTRANSFERASE K/L"/>
    <property type="match status" value="1"/>
</dbReference>
<dbReference type="PANTHER" id="PTHR47313:SF1">
    <property type="entry name" value="RIBOSOMAL RNA LARGE SUBUNIT METHYLTRANSFERASE K_L"/>
    <property type="match status" value="1"/>
</dbReference>
<dbReference type="Pfam" id="PF10672">
    <property type="entry name" value="Methyltrans_SAM"/>
    <property type="match status" value="1"/>
</dbReference>
<dbReference type="Pfam" id="PF22020">
    <property type="entry name" value="RlmL_1st"/>
    <property type="match status" value="1"/>
</dbReference>
<dbReference type="Pfam" id="PF02926">
    <property type="entry name" value="THUMP"/>
    <property type="match status" value="1"/>
</dbReference>
<dbReference type="Pfam" id="PF01170">
    <property type="entry name" value="UPF0020"/>
    <property type="match status" value="1"/>
</dbReference>
<dbReference type="PIRSF" id="PIRSF037618">
    <property type="entry name" value="RNA_Mtase_bacteria_prd"/>
    <property type="match status" value="1"/>
</dbReference>
<dbReference type="SMART" id="SM00981">
    <property type="entry name" value="THUMP"/>
    <property type="match status" value="1"/>
</dbReference>
<dbReference type="SUPFAM" id="SSF53335">
    <property type="entry name" value="S-adenosyl-L-methionine-dependent methyltransferases"/>
    <property type="match status" value="2"/>
</dbReference>
<dbReference type="PROSITE" id="PS51165">
    <property type="entry name" value="THUMP"/>
    <property type="match status" value="1"/>
</dbReference>
<dbReference type="PROSITE" id="PS01261">
    <property type="entry name" value="UPF0020"/>
    <property type="match status" value="1"/>
</dbReference>
<sequence>MNSLFASTARGLEELLKSELEALGAHDCKIVQGGVHFQGDDRLMYQSLLWSRLASRILLPLNDFKVYSDLDLYLGVQAIDWPSIFGVDKTFAVHFSGVNDEIRNSQYGALKVKDAIVDSFTRKLDQRPTVAKQQPDIRVNVFLQRDMASVALDLSGEGLHQRGYRDLTGQAPLKENLAAAIIQRSGWQLGTPMADPMCGSGTLLIEAAMMASDRAPGLHREHWGFTAWNAFNQELWRELTTEAQVRARRGLQETTSRFFGSDIDRRVIEMARANARRAGVAELITFNANDVSKLVNPLPEGPVGTVISNPPYGERLDSEPALIALHNMLGRIMKASFGGWRLSLFSASPELLSCLQLRAEREFKAKNGPLDCVQKNYQLAANPQGAVGVQVAEDYANRLRKNVKKLDKWAKQQGIECYRLYDADLPDYNVAVDRYGSKVVVQEYAPPKTIDAQKARQRLFDVINATLAVLNLPSNQLVLKTRERQKGKNQYEKLAQKGEFLLVSEYNAKLWVNLTDYLDTGLFLDHRIARQMLGKMSQGKDFLNLFAYTGTASVHAGLGGARSTTTVDMSRTYLEWAEKNLRANGLTGQQHRLIQADCLSWLSNTDEQFDVIFIDPPTFSNSKRMETTFDVQRDHLVLMKELKRLLRRKGTIMFSNNKRGFQMDLDGIKALGLEAKEITAQTQSEDFARNRQIHNCWLVTHSHEEK</sequence>
<proteinExistence type="inferred from homology"/>
<accession>A1JMQ6</accession>
<evidence type="ECO:0000255" key="1">
    <source>
        <dbReference type="HAMAP-Rule" id="MF_01858"/>
    </source>
</evidence>